<accession>B8GP96</accession>
<gene>
    <name type="ordered locus">Tgr7_2944</name>
</gene>
<protein>
    <recommendedName>
        <fullName evidence="1">Probable Fe(2+)-trafficking protein</fullName>
    </recommendedName>
</protein>
<name>FETP_THISH</name>
<reference key="1">
    <citation type="journal article" date="2011" name="Stand. Genomic Sci.">
        <title>Complete genome sequence of 'Thioalkalivibrio sulfidophilus' HL-EbGr7.</title>
        <authorList>
            <person name="Muyzer G."/>
            <person name="Sorokin D.Y."/>
            <person name="Mavromatis K."/>
            <person name="Lapidus A."/>
            <person name="Clum A."/>
            <person name="Ivanova N."/>
            <person name="Pati A."/>
            <person name="d'Haeseleer P."/>
            <person name="Woyke T."/>
            <person name="Kyrpides N.C."/>
        </authorList>
    </citation>
    <scope>NUCLEOTIDE SEQUENCE [LARGE SCALE GENOMIC DNA]</scope>
    <source>
        <strain>HL-EbGR7</strain>
    </source>
</reference>
<evidence type="ECO:0000255" key="1">
    <source>
        <dbReference type="HAMAP-Rule" id="MF_00686"/>
    </source>
</evidence>
<proteinExistence type="inferred from homology"/>
<organism>
    <name type="scientific">Thioalkalivibrio sulfidiphilus (strain HL-EbGR7)</name>
    <dbReference type="NCBI Taxonomy" id="396588"/>
    <lineage>
        <taxon>Bacteria</taxon>
        <taxon>Pseudomonadati</taxon>
        <taxon>Pseudomonadota</taxon>
        <taxon>Gammaproteobacteria</taxon>
        <taxon>Chromatiales</taxon>
        <taxon>Ectothiorhodospiraceae</taxon>
        <taxon>Thioalkalivibrio</taxon>
    </lineage>
</organism>
<keyword id="KW-0408">Iron</keyword>
<keyword id="KW-1185">Reference proteome</keyword>
<comment type="function">
    <text evidence="1">Could be a mediator in iron transactions between iron acquisition and iron-requiring processes, such as synthesis and/or repair of Fe-S clusters in biosynthetic enzymes.</text>
</comment>
<comment type="similarity">
    <text evidence="1">Belongs to the Fe(2+)-trafficking protein family.</text>
</comment>
<dbReference type="EMBL" id="CP001339">
    <property type="protein sequence ID" value="ACL74016.1"/>
    <property type="molecule type" value="Genomic_DNA"/>
</dbReference>
<dbReference type="RefSeq" id="WP_012639479.1">
    <property type="nucleotide sequence ID" value="NC_011901.1"/>
</dbReference>
<dbReference type="SMR" id="B8GP96"/>
<dbReference type="STRING" id="396588.Tgr7_2944"/>
<dbReference type="KEGG" id="tgr:Tgr7_2944"/>
<dbReference type="eggNOG" id="COG2924">
    <property type="taxonomic scope" value="Bacteria"/>
</dbReference>
<dbReference type="HOGENOM" id="CLU_170994_0_0_6"/>
<dbReference type="OrthoDB" id="9804318at2"/>
<dbReference type="Proteomes" id="UP000002383">
    <property type="component" value="Chromosome"/>
</dbReference>
<dbReference type="GO" id="GO:0005829">
    <property type="term" value="C:cytosol"/>
    <property type="evidence" value="ECO:0007669"/>
    <property type="project" value="TreeGrafter"/>
</dbReference>
<dbReference type="GO" id="GO:0005506">
    <property type="term" value="F:iron ion binding"/>
    <property type="evidence" value="ECO:0007669"/>
    <property type="project" value="UniProtKB-UniRule"/>
</dbReference>
<dbReference type="GO" id="GO:0034599">
    <property type="term" value="P:cellular response to oxidative stress"/>
    <property type="evidence" value="ECO:0007669"/>
    <property type="project" value="TreeGrafter"/>
</dbReference>
<dbReference type="FunFam" id="1.10.3880.10:FF:000001">
    <property type="entry name" value="Probable Fe(2+)-trafficking protein"/>
    <property type="match status" value="1"/>
</dbReference>
<dbReference type="Gene3D" id="1.10.3880.10">
    <property type="entry name" value="Fe(II) trafficking protein YggX"/>
    <property type="match status" value="1"/>
</dbReference>
<dbReference type="HAMAP" id="MF_00686">
    <property type="entry name" value="Fe_traffic_YggX"/>
    <property type="match status" value="1"/>
</dbReference>
<dbReference type="InterPro" id="IPR007457">
    <property type="entry name" value="Fe_traffick_prot_YggX"/>
</dbReference>
<dbReference type="InterPro" id="IPR036766">
    <property type="entry name" value="Fe_traffick_prot_YggX_sf"/>
</dbReference>
<dbReference type="NCBIfam" id="NF003817">
    <property type="entry name" value="PRK05408.1"/>
    <property type="match status" value="1"/>
</dbReference>
<dbReference type="PANTHER" id="PTHR36965">
    <property type="entry name" value="FE(2+)-TRAFFICKING PROTEIN-RELATED"/>
    <property type="match status" value="1"/>
</dbReference>
<dbReference type="PANTHER" id="PTHR36965:SF1">
    <property type="entry name" value="FE(2+)-TRAFFICKING PROTEIN-RELATED"/>
    <property type="match status" value="1"/>
</dbReference>
<dbReference type="Pfam" id="PF04362">
    <property type="entry name" value="Iron_traffic"/>
    <property type="match status" value="1"/>
</dbReference>
<dbReference type="PIRSF" id="PIRSF029827">
    <property type="entry name" value="Fe_traffic_YggX"/>
    <property type="match status" value="1"/>
</dbReference>
<dbReference type="SUPFAM" id="SSF111148">
    <property type="entry name" value="YggX-like"/>
    <property type="match status" value="1"/>
</dbReference>
<feature type="chain" id="PRO_1000147771" description="Probable Fe(2+)-trafficking protein">
    <location>
        <begin position="1"/>
        <end position="90"/>
    </location>
</feature>
<sequence length="90" mass="10300">MARMVNCVLLGKEAEGLDFPPYPGELGKKIYEGVSKEAWQKWVKHQTMLINEYRLTPVDPKARKFLEEEMDKFFFSGGSTKPEGYVAPSK</sequence>